<protein>
    <recommendedName>
        <fullName>Guanine nucleotide-binding protein G(I)/G(S)/G(O) subunit gamma-12</fullName>
    </recommendedName>
</protein>
<accession>Q5RBQ0</accession>
<reference key="1">
    <citation type="submission" date="2004-11" db="EMBL/GenBank/DDBJ databases">
        <authorList>
            <consortium name="The German cDNA consortium"/>
        </authorList>
    </citation>
    <scope>NUCLEOTIDE SEQUENCE [LARGE SCALE MRNA]</scope>
    <source>
        <tissue>Kidney</tissue>
    </source>
</reference>
<name>GBG12_PONAB</name>
<sequence>MSSKTASTNNIAQARRTVQQLRLEASIERIKVSKASADLMSYCEEHARSDPLLIGIPTSENPFKDKKTCIIL</sequence>
<feature type="initiator methionine" description="Removed" evidence="2">
    <location>
        <position position="1"/>
    </location>
</feature>
<feature type="chain" id="PRO_0000042167" description="Guanine nucleotide-binding protein G(I)/G(S)/G(O) subunit gamma-12">
    <location>
        <begin position="2"/>
        <end position="69"/>
    </location>
</feature>
<feature type="propeptide" id="PRO_0000042168" description="Removed in mature form" evidence="1">
    <location>
        <begin position="70"/>
        <end position="72"/>
    </location>
</feature>
<feature type="modified residue" description="N-acetylserine" evidence="2">
    <location>
        <position position="2"/>
    </location>
</feature>
<feature type="modified residue" description="Phosphoserine" evidence="3">
    <location>
        <position position="26"/>
    </location>
</feature>
<feature type="modified residue" description="Phosphotyrosine" evidence="3">
    <location>
        <position position="42"/>
    </location>
</feature>
<feature type="modified residue" description="Phosphoserine" evidence="4">
    <location>
        <position position="49"/>
    </location>
</feature>
<feature type="modified residue" description="Cysteine methyl ester" evidence="1">
    <location>
        <position position="69"/>
    </location>
</feature>
<feature type="lipid moiety-binding region" description="S-geranylgeranyl cysteine" evidence="1">
    <location>
        <position position="69"/>
    </location>
</feature>
<proteinExistence type="inferred from homology"/>
<evidence type="ECO:0000250" key="1"/>
<evidence type="ECO:0000250" key="2">
    <source>
        <dbReference type="UniProtKB" id="Q28024"/>
    </source>
</evidence>
<evidence type="ECO:0000250" key="3">
    <source>
        <dbReference type="UniProtKB" id="Q9DAS9"/>
    </source>
</evidence>
<evidence type="ECO:0000250" key="4">
    <source>
        <dbReference type="UniProtKB" id="Q9UBI6"/>
    </source>
</evidence>
<evidence type="ECO:0000305" key="5"/>
<comment type="function">
    <text>Guanine nucleotide-binding proteins (G proteins) are involved as a modulator or transducer in various transmembrane signaling systems. The beta and gamma chains are required for the GTPase activity, for replacement of GDP by GTP, and for G protein-effector interaction.</text>
</comment>
<comment type="subunit">
    <text>G proteins are composed of 3 units, alpha, beta and gamma.</text>
</comment>
<comment type="subcellular location">
    <subcellularLocation>
        <location evidence="5">Cell membrane</location>
        <topology evidence="5">Lipid-anchor</topology>
        <orientation evidence="5">Cytoplasmic side</orientation>
    </subcellularLocation>
</comment>
<comment type="similarity">
    <text evidence="5">Belongs to the G protein gamma family.</text>
</comment>
<gene>
    <name type="primary">GNG12</name>
</gene>
<organism>
    <name type="scientific">Pongo abelii</name>
    <name type="common">Sumatran orangutan</name>
    <name type="synonym">Pongo pygmaeus abelii</name>
    <dbReference type="NCBI Taxonomy" id="9601"/>
    <lineage>
        <taxon>Eukaryota</taxon>
        <taxon>Metazoa</taxon>
        <taxon>Chordata</taxon>
        <taxon>Craniata</taxon>
        <taxon>Vertebrata</taxon>
        <taxon>Euteleostomi</taxon>
        <taxon>Mammalia</taxon>
        <taxon>Eutheria</taxon>
        <taxon>Euarchontoglires</taxon>
        <taxon>Primates</taxon>
        <taxon>Haplorrhini</taxon>
        <taxon>Catarrhini</taxon>
        <taxon>Hominidae</taxon>
        <taxon>Pongo</taxon>
    </lineage>
</organism>
<keyword id="KW-0007">Acetylation</keyword>
<keyword id="KW-1003">Cell membrane</keyword>
<keyword id="KW-0449">Lipoprotein</keyword>
<keyword id="KW-0472">Membrane</keyword>
<keyword id="KW-0488">Methylation</keyword>
<keyword id="KW-0597">Phosphoprotein</keyword>
<keyword id="KW-0636">Prenylation</keyword>
<keyword id="KW-1185">Reference proteome</keyword>
<keyword id="KW-0807">Transducer</keyword>
<dbReference type="EMBL" id="CR858588">
    <property type="protein sequence ID" value="CAH90810.1"/>
    <property type="molecule type" value="mRNA"/>
</dbReference>
<dbReference type="EMBL" id="CR859714">
    <property type="protein sequence ID" value="CAH91873.1"/>
    <property type="molecule type" value="mRNA"/>
</dbReference>
<dbReference type="RefSeq" id="NP_001126086.1">
    <property type="nucleotide sequence ID" value="NM_001132614.1"/>
</dbReference>
<dbReference type="RefSeq" id="XP_009247387.1">
    <property type="nucleotide sequence ID" value="XM_009249112.4"/>
</dbReference>
<dbReference type="RefSeq" id="XP_009247391.1">
    <property type="nucleotide sequence ID" value="XM_009249116.4"/>
</dbReference>
<dbReference type="RefSeq" id="XP_009247396.1">
    <property type="nucleotide sequence ID" value="XM_009249121.1"/>
</dbReference>
<dbReference type="RefSeq" id="XP_054381233.1">
    <property type="nucleotide sequence ID" value="XM_054525258.2"/>
</dbReference>
<dbReference type="RefSeq" id="XP_063569750.1">
    <property type="nucleotide sequence ID" value="XM_063713680.1"/>
</dbReference>
<dbReference type="SMR" id="Q5RBQ0"/>
<dbReference type="FunCoup" id="Q5RBQ0">
    <property type="interactions" value="2113"/>
</dbReference>
<dbReference type="STRING" id="9601.ENSPPYP00000001459"/>
<dbReference type="GeneID" id="100173039"/>
<dbReference type="KEGG" id="pon:100173039"/>
<dbReference type="CTD" id="55970"/>
<dbReference type="eggNOG" id="KOG4119">
    <property type="taxonomic scope" value="Eukaryota"/>
</dbReference>
<dbReference type="HOGENOM" id="CLU_168377_3_1_1"/>
<dbReference type="InParanoid" id="Q5RBQ0"/>
<dbReference type="OrthoDB" id="6264244at2759"/>
<dbReference type="TreeFam" id="TF319909"/>
<dbReference type="Proteomes" id="UP000001595">
    <property type="component" value="Chromosome 1"/>
</dbReference>
<dbReference type="GO" id="GO:0005834">
    <property type="term" value="C:heterotrimeric G-protein complex"/>
    <property type="evidence" value="ECO:0007669"/>
    <property type="project" value="InterPro"/>
</dbReference>
<dbReference type="GO" id="GO:0031681">
    <property type="term" value="F:G-protein beta-subunit binding"/>
    <property type="evidence" value="ECO:0007669"/>
    <property type="project" value="InterPro"/>
</dbReference>
<dbReference type="GO" id="GO:0007186">
    <property type="term" value="P:G protein-coupled receptor signaling pathway"/>
    <property type="evidence" value="ECO:0007669"/>
    <property type="project" value="InterPro"/>
</dbReference>
<dbReference type="CDD" id="cd00068">
    <property type="entry name" value="GGL"/>
    <property type="match status" value="1"/>
</dbReference>
<dbReference type="FunFam" id="4.10.260.10:FF:000001">
    <property type="entry name" value="Guanine nucleotide-binding protein subunit gamma"/>
    <property type="match status" value="1"/>
</dbReference>
<dbReference type="Gene3D" id="4.10.260.10">
    <property type="entry name" value="Transducin (heterotrimeric G protein), gamma chain"/>
    <property type="match status" value="1"/>
</dbReference>
<dbReference type="InterPro" id="IPR015898">
    <property type="entry name" value="G-protein_gamma-like_dom"/>
</dbReference>
<dbReference type="InterPro" id="IPR036284">
    <property type="entry name" value="GGL_sf"/>
</dbReference>
<dbReference type="InterPro" id="IPR001770">
    <property type="entry name" value="Gprotein-gamma"/>
</dbReference>
<dbReference type="PANTHER" id="PTHR13809">
    <property type="entry name" value="GUANINE NUCLEOTIDE-BINDING PROTEIN GAMMA SUBUNIT"/>
    <property type="match status" value="1"/>
</dbReference>
<dbReference type="Pfam" id="PF00631">
    <property type="entry name" value="G-gamma"/>
    <property type="match status" value="1"/>
</dbReference>
<dbReference type="PRINTS" id="PR00321">
    <property type="entry name" value="GPROTEING"/>
</dbReference>
<dbReference type="SMART" id="SM01224">
    <property type="entry name" value="G_gamma"/>
    <property type="match status" value="1"/>
</dbReference>
<dbReference type="SMART" id="SM00224">
    <property type="entry name" value="GGL"/>
    <property type="match status" value="1"/>
</dbReference>
<dbReference type="SUPFAM" id="SSF48670">
    <property type="entry name" value="Transducin (heterotrimeric G protein), gamma chain"/>
    <property type="match status" value="1"/>
</dbReference>
<dbReference type="PROSITE" id="PS50058">
    <property type="entry name" value="G_PROTEIN_GAMMA"/>
    <property type="match status" value="1"/>
</dbReference>